<reference key="1">
    <citation type="journal article" date="2005" name="Proc. Natl. Acad. Sci. U.S.A.">
        <title>Complete genome sequence of Vibrio fischeri: a symbiotic bacterium with pathogenic congeners.</title>
        <authorList>
            <person name="Ruby E.G."/>
            <person name="Urbanowski M."/>
            <person name="Campbell J."/>
            <person name="Dunn A."/>
            <person name="Faini M."/>
            <person name="Gunsalus R."/>
            <person name="Lostroh P."/>
            <person name="Lupp C."/>
            <person name="McCann J."/>
            <person name="Millikan D."/>
            <person name="Schaefer A."/>
            <person name="Stabb E."/>
            <person name="Stevens A."/>
            <person name="Visick K."/>
            <person name="Whistler C."/>
            <person name="Greenberg E.P."/>
        </authorList>
    </citation>
    <scope>NUCLEOTIDE SEQUENCE [LARGE SCALE GENOMIC DNA]</scope>
    <source>
        <strain>ATCC 700601 / ES114</strain>
    </source>
</reference>
<comment type="function">
    <text evidence="1">Catalyzes the formation of phosphatidylethanolamine (PtdEtn) from phosphatidylserine (PtdSer).</text>
</comment>
<comment type="catalytic activity">
    <reaction evidence="1">
        <text>a 1,2-diacyl-sn-glycero-3-phospho-L-serine + H(+) = a 1,2-diacyl-sn-glycero-3-phosphoethanolamine + CO2</text>
        <dbReference type="Rhea" id="RHEA:20828"/>
        <dbReference type="ChEBI" id="CHEBI:15378"/>
        <dbReference type="ChEBI" id="CHEBI:16526"/>
        <dbReference type="ChEBI" id="CHEBI:57262"/>
        <dbReference type="ChEBI" id="CHEBI:64612"/>
        <dbReference type="EC" id="4.1.1.65"/>
    </reaction>
</comment>
<comment type="cofactor">
    <cofactor evidence="1">
        <name>pyruvate</name>
        <dbReference type="ChEBI" id="CHEBI:15361"/>
    </cofactor>
    <text evidence="1">Binds 1 pyruvoyl group covalently per subunit.</text>
</comment>
<comment type="pathway">
    <text evidence="1">Phospholipid metabolism; phosphatidylethanolamine biosynthesis; phosphatidylethanolamine from CDP-diacylglycerol: step 2/2.</text>
</comment>
<comment type="subunit">
    <text evidence="1">Heterodimer of a large membrane-associated beta subunit and a small pyruvoyl-containing alpha subunit.</text>
</comment>
<comment type="subcellular location">
    <subcellularLocation>
        <location evidence="1">Cell membrane</location>
        <topology evidence="1">Peripheral membrane protein</topology>
    </subcellularLocation>
</comment>
<comment type="PTM">
    <text evidence="1">Is synthesized initially as an inactive proenzyme. Formation of the active enzyme involves a self-maturation process in which the active site pyruvoyl group is generated from an internal serine residue via an autocatalytic post-translational modification. Two non-identical subunits are generated from the proenzyme in this reaction, and the pyruvate is formed at the N-terminus of the alpha chain, which is derived from the carboxyl end of the proenzyme. The autoendoproteolytic cleavage occurs by a canonical serine protease mechanism, in which the side chain hydroxyl group of the serine supplies its oxygen atom to form the C-terminus of the beta chain, while the remainder of the serine residue undergoes an oxidative deamination to produce ammonia and the pyruvoyl prosthetic group on the alpha chain. During this reaction, the Ser that is part of the protease active site of the proenzyme becomes the pyruvoyl prosthetic group, which constitutes an essential element of the active site of the mature decarboxylase.</text>
</comment>
<comment type="similarity">
    <text evidence="1">Belongs to the phosphatidylserine decarboxylase family. PSD-B subfamily. Prokaryotic type I sub-subfamily.</text>
</comment>
<accession>Q5E2C0</accession>
<gene>
    <name evidence="1" type="primary">psd</name>
    <name type="ordered locus">VF_2331</name>
</gene>
<name>PSD_ALIF1</name>
<dbReference type="EC" id="4.1.1.65" evidence="1"/>
<dbReference type="EMBL" id="CP000020">
    <property type="protein sequence ID" value="AAW86826.1"/>
    <property type="molecule type" value="Genomic_DNA"/>
</dbReference>
<dbReference type="RefSeq" id="WP_005421177.1">
    <property type="nucleotide sequence ID" value="NC_006840.2"/>
</dbReference>
<dbReference type="RefSeq" id="YP_205714.1">
    <property type="nucleotide sequence ID" value="NC_006840.2"/>
</dbReference>
<dbReference type="SMR" id="Q5E2C0"/>
<dbReference type="STRING" id="312309.VF_2331"/>
<dbReference type="EnsemblBacteria" id="AAW86826">
    <property type="protein sequence ID" value="AAW86826"/>
    <property type="gene ID" value="VF_2331"/>
</dbReference>
<dbReference type="GeneID" id="54165054"/>
<dbReference type="KEGG" id="vfi:VF_2331"/>
<dbReference type="PATRIC" id="fig|312309.11.peg.2370"/>
<dbReference type="eggNOG" id="COG0688">
    <property type="taxonomic scope" value="Bacteria"/>
</dbReference>
<dbReference type="HOGENOM" id="CLU_029061_4_1_6"/>
<dbReference type="OrthoDB" id="9802030at2"/>
<dbReference type="UniPathway" id="UPA00558">
    <property type="reaction ID" value="UER00616"/>
</dbReference>
<dbReference type="Proteomes" id="UP000000537">
    <property type="component" value="Chromosome I"/>
</dbReference>
<dbReference type="GO" id="GO:0005886">
    <property type="term" value="C:plasma membrane"/>
    <property type="evidence" value="ECO:0007669"/>
    <property type="project" value="UniProtKB-SubCell"/>
</dbReference>
<dbReference type="GO" id="GO:0004609">
    <property type="term" value="F:phosphatidylserine decarboxylase activity"/>
    <property type="evidence" value="ECO:0007669"/>
    <property type="project" value="UniProtKB-UniRule"/>
</dbReference>
<dbReference type="GO" id="GO:0006646">
    <property type="term" value="P:phosphatidylethanolamine biosynthetic process"/>
    <property type="evidence" value="ECO:0007669"/>
    <property type="project" value="UniProtKB-UniRule"/>
</dbReference>
<dbReference type="HAMAP" id="MF_00662">
    <property type="entry name" value="PS_decarb_PSD_B_type1"/>
    <property type="match status" value="1"/>
</dbReference>
<dbReference type="InterPro" id="IPR003817">
    <property type="entry name" value="PS_Dcarbxylase"/>
</dbReference>
<dbReference type="InterPro" id="IPR033177">
    <property type="entry name" value="PSD-B"/>
</dbReference>
<dbReference type="InterPro" id="IPR033178">
    <property type="entry name" value="PSD_type1_pro"/>
</dbReference>
<dbReference type="NCBIfam" id="TIGR00163">
    <property type="entry name" value="PS_decarb"/>
    <property type="match status" value="1"/>
</dbReference>
<dbReference type="PANTHER" id="PTHR10067">
    <property type="entry name" value="PHOSPHATIDYLSERINE DECARBOXYLASE"/>
    <property type="match status" value="1"/>
</dbReference>
<dbReference type="PANTHER" id="PTHR10067:SF6">
    <property type="entry name" value="PHOSPHATIDYLSERINE DECARBOXYLASE PROENZYME, MITOCHONDRIAL"/>
    <property type="match status" value="1"/>
</dbReference>
<dbReference type="Pfam" id="PF02666">
    <property type="entry name" value="PS_Dcarbxylase"/>
    <property type="match status" value="1"/>
</dbReference>
<proteinExistence type="inferred from homology"/>
<evidence type="ECO:0000255" key="1">
    <source>
        <dbReference type="HAMAP-Rule" id="MF_00662"/>
    </source>
</evidence>
<keyword id="KW-1003">Cell membrane</keyword>
<keyword id="KW-0210">Decarboxylase</keyword>
<keyword id="KW-0444">Lipid biosynthesis</keyword>
<keyword id="KW-0443">Lipid metabolism</keyword>
<keyword id="KW-0456">Lyase</keyword>
<keyword id="KW-0472">Membrane</keyword>
<keyword id="KW-0594">Phospholipid biosynthesis</keyword>
<keyword id="KW-1208">Phospholipid metabolism</keyword>
<keyword id="KW-0670">Pyruvate</keyword>
<keyword id="KW-1185">Reference proteome</keyword>
<keyword id="KW-0865">Zymogen</keyword>
<organism>
    <name type="scientific">Aliivibrio fischeri (strain ATCC 700601 / ES114)</name>
    <name type="common">Vibrio fischeri</name>
    <dbReference type="NCBI Taxonomy" id="312309"/>
    <lineage>
        <taxon>Bacteria</taxon>
        <taxon>Pseudomonadati</taxon>
        <taxon>Pseudomonadota</taxon>
        <taxon>Gammaproteobacteria</taxon>
        <taxon>Vibrionales</taxon>
        <taxon>Vibrionaceae</taxon>
        <taxon>Aliivibrio</taxon>
    </lineage>
</organism>
<feature type="chain" id="PRO_0000029703" description="Phosphatidylserine decarboxylase beta chain" evidence="1">
    <location>
        <begin position="1"/>
        <end position="252"/>
    </location>
</feature>
<feature type="chain" id="PRO_0000029704" description="Phosphatidylserine decarboxylase alpha chain" evidence="1">
    <location>
        <begin position="253"/>
        <end position="287"/>
    </location>
</feature>
<feature type="active site" description="Charge relay system; for autoendoproteolytic cleavage activity" evidence="1">
    <location>
        <position position="90"/>
    </location>
</feature>
<feature type="active site" description="Charge relay system; for autoendoproteolytic cleavage activity" evidence="1">
    <location>
        <position position="147"/>
    </location>
</feature>
<feature type="active site" description="Charge relay system; for autoendoproteolytic cleavage activity" evidence="1">
    <location>
        <position position="253"/>
    </location>
</feature>
<feature type="active site" description="Schiff-base intermediate with substrate; via pyruvic acid; for decarboxylase activity" evidence="1">
    <location>
        <position position="253"/>
    </location>
</feature>
<feature type="site" description="Cleavage (non-hydrolytic); by autocatalysis" evidence="1">
    <location>
        <begin position="252"/>
        <end position="253"/>
    </location>
</feature>
<feature type="modified residue" description="Pyruvic acid (Ser); by autocatalysis" evidence="1">
    <location>
        <position position="253"/>
    </location>
</feature>
<sequence>MSDNLKIGLQYLTPKHALTRLAGKLASAKMGWLTTAVIKWFIKQYNVNMDEAKNPDPEAYSTFNNFFVRELEDGARPINEDDSVISHPADACVSQFGPIMDGKLVQAKGHVYSAQELLGGDEALAAEFMGGEFATLYLSPSDYHRVHMPCDATLRKMIYVPGDLFSVNPLTAENVPNLFARNERVVCIFDTEFGPMAQILVGATIVGSIETTWAETVTPPTGPAVKTWHYPLSGDDMICFKKGEEMGRFKLGSTVINLFAPNSIKFDDSMENGTPTRMGTPFAHIVK</sequence>
<protein>
    <recommendedName>
        <fullName evidence="1">Phosphatidylserine decarboxylase proenzyme</fullName>
        <ecNumber evidence="1">4.1.1.65</ecNumber>
    </recommendedName>
    <component>
        <recommendedName>
            <fullName evidence="1">Phosphatidylserine decarboxylase alpha chain</fullName>
        </recommendedName>
    </component>
    <component>
        <recommendedName>
            <fullName evidence="1">Phosphatidylserine decarboxylase beta chain</fullName>
        </recommendedName>
    </component>
</protein>